<keyword id="KW-0966">Cell projection</keyword>
<keyword id="KW-0969">Cilium</keyword>
<keyword id="KW-0963">Cytoplasm</keyword>
<keyword id="KW-0206">Cytoskeleton</keyword>
<keyword id="KW-0282">Flagellum</keyword>
<keyword id="KW-1185">Reference proteome</keyword>
<comment type="function">
    <text evidence="1">Microtubule inner protein (MIP) part of the dynein-decorated doublet microtubules (DMTs) in cilia axoneme, which is required for motile cilia beating.</text>
</comment>
<comment type="subcellular location">
    <subcellularLocation>
        <location evidence="4">Cytoplasm</location>
        <location evidence="4">Cytoskeleton</location>
        <location evidence="4">Cilium axoneme</location>
    </subcellularLocation>
    <subcellularLocation>
        <location evidence="2">Cytoplasm</location>
        <location evidence="2">Cytoskeleton</location>
        <location evidence="2">Flagellum axoneme</location>
    </subcellularLocation>
</comment>
<comment type="tissue specificity">
    <text evidence="4">Expressed in choroid plexus (at protein level). Expressed by motile ciliated cells in choroid plexus.</text>
</comment>
<comment type="similarity">
    <text evidence="5">Belongs to the CFAP144 family.</text>
</comment>
<protein>
    <recommendedName>
        <fullName>Cilia- and flagella-associated protein 144</fullName>
    </recommendedName>
    <alternativeName>
        <fullName>Protein FAM183A</fullName>
    </alternativeName>
</protein>
<organism>
    <name type="scientific">Gallus gallus</name>
    <name type="common">Chicken</name>
    <dbReference type="NCBI Taxonomy" id="9031"/>
    <lineage>
        <taxon>Eukaryota</taxon>
        <taxon>Metazoa</taxon>
        <taxon>Chordata</taxon>
        <taxon>Craniata</taxon>
        <taxon>Vertebrata</taxon>
        <taxon>Euteleostomi</taxon>
        <taxon>Archelosauria</taxon>
        <taxon>Archosauria</taxon>
        <taxon>Dinosauria</taxon>
        <taxon>Saurischia</taxon>
        <taxon>Theropoda</taxon>
        <taxon>Coelurosauria</taxon>
        <taxon>Aves</taxon>
        <taxon>Neognathae</taxon>
        <taxon>Galloanserae</taxon>
        <taxon>Galliformes</taxon>
        <taxon>Phasianidae</taxon>
        <taxon>Phasianinae</taxon>
        <taxon>Gallus</taxon>
    </lineage>
</organism>
<feature type="chain" id="PRO_0000457669" description="Cilia- and flagella-associated protein 144">
    <location>
        <begin position="1"/>
        <end position="131"/>
    </location>
</feature>
<feature type="region of interest" description="Disordered" evidence="3">
    <location>
        <begin position="79"/>
        <end position="99"/>
    </location>
</feature>
<feature type="compositionally biased region" description="Polar residues" evidence="3">
    <location>
        <begin position="84"/>
        <end position="99"/>
    </location>
</feature>
<reference key="1">
    <citation type="journal article" date="2004" name="Nature">
        <title>Sequence and comparative analysis of the chicken genome provide unique perspectives on vertebrate evolution.</title>
        <authorList>
            <person name="Hillier L.W."/>
            <person name="Miller W."/>
            <person name="Birney E."/>
            <person name="Warren W."/>
            <person name="Hardison R.C."/>
            <person name="Ponting C.P."/>
            <person name="Bork P."/>
            <person name="Burt D.W."/>
            <person name="Groenen M.A.M."/>
            <person name="Delany M.E."/>
            <person name="Dodgson J.B."/>
            <person name="Chinwalla A.T."/>
            <person name="Cliften P.F."/>
            <person name="Clifton S.W."/>
            <person name="Delehaunty K.D."/>
            <person name="Fronick C."/>
            <person name="Fulton R.S."/>
            <person name="Graves T.A."/>
            <person name="Kremitzki C."/>
            <person name="Layman D."/>
            <person name="Magrini V."/>
            <person name="McPherson J.D."/>
            <person name="Miner T.L."/>
            <person name="Minx P."/>
            <person name="Nash W.E."/>
            <person name="Nhan M.N."/>
            <person name="Nelson J.O."/>
            <person name="Oddy L.G."/>
            <person name="Pohl C.S."/>
            <person name="Randall-Maher J."/>
            <person name="Smith S.M."/>
            <person name="Wallis J.W."/>
            <person name="Yang S.-P."/>
            <person name="Romanov M.N."/>
            <person name="Rondelli C.M."/>
            <person name="Paton B."/>
            <person name="Smith J."/>
            <person name="Morrice D."/>
            <person name="Daniels L."/>
            <person name="Tempest H.G."/>
            <person name="Robertson L."/>
            <person name="Masabanda J.S."/>
            <person name="Griffin D.K."/>
            <person name="Vignal A."/>
            <person name="Fillon V."/>
            <person name="Jacobbson L."/>
            <person name="Kerje S."/>
            <person name="Andersson L."/>
            <person name="Crooijmans R.P."/>
            <person name="Aerts J."/>
            <person name="van der Poel J.J."/>
            <person name="Ellegren H."/>
            <person name="Caldwell R.B."/>
            <person name="Hubbard S.J."/>
            <person name="Grafham D.V."/>
            <person name="Kierzek A.M."/>
            <person name="McLaren S.R."/>
            <person name="Overton I.M."/>
            <person name="Arakawa H."/>
            <person name="Beattie K.J."/>
            <person name="Bezzubov Y."/>
            <person name="Boardman P.E."/>
            <person name="Bonfield J.K."/>
            <person name="Croning M.D.R."/>
            <person name="Davies R.M."/>
            <person name="Francis M.D."/>
            <person name="Humphray S.J."/>
            <person name="Scott C.E."/>
            <person name="Taylor R.G."/>
            <person name="Tickle C."/>
            <person name="Brown W.R.A."/>
            <person name="Rogers J."/>
            <person name="Buerstedde J.-M."/>
            <person name="Wilson S.A."/>
            <person name="Stubbs L."/>
            <person name="Ovcharenko I."/>
            <person name="Gordon L."/>
            <person name="Lucas S."/>
            <person name="Miller M.M."/>
            <person name="Inoko H."/>
            <person name="Shiina T."/>
            <person name="Kaufman J."/>
            <person name="Salomonsen J."/>
            <person name="Skjoedt K."/>
            <person name="Wong G.K.-S."/>
            <person name="Wang J."/>
            <person name="Liu B."/>
            <person name="Wang J."/>
            <person name="Yu J."/>
            <person name="Yang H."/>
            <person name="Nefedov M."/>
            <person name="Koriabine M."/>
            <person name="Dejong P.J."/>
            <person name="Goodstadt L."/>
            <person name="Webber C."/>
            <person name="Dickens N.J."/>
            <person name="Letunic I."/>
            <person name="Suyama M."/>
            <person name="Torrents D."/>
            <person name="von Mering C."/>
            <person name="Zdobnov E.M."/>
            <person name="Makova K."/>
            <person name="Nekrutenko A."/>
            <person name="Elnitski L."/>
            <person name="Eswara P."/>
            <person name="King D.C."/>
            <person name="Yang S.-P."/>
            <person name="Tyekucheva S."/>
            <person name="Radakrishnan A."/>
            <person name="Harris R.S."/>
            <person name="Chiaromonte F."/>
            <person name="Taylor J."/>
            <person name="He J."/>
            <person name="Rijnkels M."/>
            <person name="Griffiths-Jones S."/>
            <person name="Ureta-Vidal A."/>
            <person name="Hoffman M.M."/>
            <person name="Severin J."/>
            <person name="Searle S.M.J."/>
            <person name="Law A.S."/>
            <person name="Speed D."/>
            <person name="Waddington D."/>
            <person name="Cheng Z."/>
            <person name="Tuzun E."/>
            <person name="Eichler E."/>
            <person name="Bao Z."/>
            <person name="Flicek P."/>
            <person name="Shteynberg D.D."/>
            <person name="Brent M.R."/>
            <person name="Bye J.M."/>
            <person name="Huckle E.J."/>
            <person name="Chatterji S."/>
            <person name="Dewey C."/>
            <person name="Pachter L."/>
            <person name="Kouranov A."/>
            <person name="Mourelatos Z."/>
            <person name="Hatzigeorgiou A.G."/>
            <person name="Paterson A.H."/>
            <person name="Ivarie R."/>
            <person name="Brandstrom M."/>
            <person name="Axelsson E."/>
            <person name="Backstrom N."/>
            <person name="Berlin S."/>
            <person name="Webster M.T."/>
            <person name="Pourquie O."/>
            <person name="Reymond A."/>
            <person name="Ucla C."/>
            <person name="Antonarakis S.E."/>
            <person name="Long M."/>
            <person name="Emerson J.J."/>
            <person name="Betran E."/>
            <person name="Dupanloup I."/>
            <person name="Kaessmann H."/>
            <person name="Hinrichs A.S."/>
            <person name="Bejerano G."/>
            <person name="Furey T.S."/>
            <person name="Harte R.A."/>
            <person name="Raney B."/>
            <person name="Siepel A."/>
            <person name="Kent W.J."/>
            <person name="Haussler D."/>
            <person name="Eyras E."/>
            <person name="Castelo R."/>
            <person name="Abril J.F."/>
            <person name="Castellano S."/>
            <person name="Camara F."/>
            <person name="Parra G."/>
            <person name="Guigo R."/>
            <person name="Bourque G."/>
            <person name="Tesler G."/>
            <person name="Pevzner P.A."/>
            <person name="Smit A."/>
            <person name="Fulton L.A."/>
            <person name="Mardis E.R."/>
            <person name="Wilson R.K."/>
        </authorList>
    </citation>
    <scope>NUCLEOTIDE SEQUENCE [LARGE SCALE GENOMIC DNA]</scope>
    <source>
        <strain>Red jungle fowl</strain>
    </source>
</reference>
<reference key="2">
    <citation type="journal article" date="2020" name="Sci. Rep.">
        <title>The transcriptional signature associated with human motile cilia.</title>
        <authorList>
            <person name="Patir A."/>
            <person name="Fraser A.M."/>
            <person name="Barnett M.W."/>
            <person name="McTeir L."/>
            <person name="Rainger J."/>
            <person name="Davey M.G."/>
            <person name="Freeman T.C."/>
        </authorList>
    </citation>
    <scope>TISSUE SPECIFICITY</scope>
    <scope>SUBCELLULAR LOCATION</scope>
</reference>
<sequence>MAARGGKKEPPDAVHLNRLLYERVRKELRCQRLHTEHSINPLRPVHAVTQKPMSWHDNIEEPADARFLNIIHQAALEPTKKYSEPQTESQEIGWNTTPLTDVDRTDRRLFFPRRRTEITMHSAAGGHPKKQ</sequence>
<name>CF144_CHICK</name>
<accession>F1P3Y5</accession>
<gene>
    <name type="primary">CFAP144</name>
    <name type="synonym">FAM183A</name>
</gene>
<dbReference type="EMBL" id="AADN05000647">
    <property type="status" value="NOT_ANNOTATED_CDS"/>
    <property type="molecule type" value="Genomic_DNA"/>
</dbReference>
<dbReference type="SMR" id="F1P3Y5"/>
<dbReference type="STRING" id="9031.ENSGALP00000032581"/>
<dbReference type="PaxDb" id="9031-ENSGALP00000032581"/>
<dbReference type="Ensembl" id="ENSGALT00000033221">
    <property type="protein sequence ID" value="ENSGALP00000032581"/>
    <property type="gene ID" value="ENSGALG00000009033"/>
</dbReference>
<dbReference type="Ensembl" id="ENSGALT00010054733.1">
    <property type="protein sequence ID" value="ENSGALP00010033074.1"/>
    <property type="gene ID" value="ENSGALG00010022486.1"/>
</dbReference>
<dbReference type="VEuPathDB" id="HostDB:geneid_424557"/>
<dbReference type="eggNOG" id="ENOG502RZSS">
    <property type="taxonomic scope" value="Eukaryota"/>
</dbReference>
<dbReference type="GeneTree" id="ENSGT00390000006224"/>
<dbReference type="HOGENOM" id="CLU_155974_0_0_1"/>
<dbReference type="InParanoid" id="F1P3Y5"/>
<dbReference type="OMA" id="SQEIGWM"/>
<dbReference type="OrthoDB" id="446290at2759"/>
<dbReference type="TreeFam" id="TF329423"/>
<dbReference type="PRO" id="PR:F1P3Y5"/>
<dbReference type="Proteomes" id="UP000000539">
    <property type="component" value="Chromosome 8"/>
</dbReference>
<dbReference type="Bgee" id="ENSGALG00000009033">
    <property type="expression patterns" value="Expressed in testis and 9 other cell types or tissues"/>
</dbReference>
<dbReference type="GO" id="GO:0005879">
    <property type="term" value="C:axonemal microtubule"/>
    <property type="evidence" value="ECO:0000250"/>
    <property type="project" value="UniProtKB"/>
</dbReference>
<dbReference type="GO" id="GO:0097546">
    <property type="term" value="C:ciliary base"/>
    <property type="evidence" value="ECO:0000318"/>
    <property type="project" value="GO_Central"/>
</dbReference>
<dbReference type="GO" id="GO:0031514">
    <property type="term" value="C:motile cilium"/>
    <property type="evidence" value="ECO:0007669"/>
    <property type="project" value="UniProtKB-KW"/>
</dbReference>
<dbReference type="GO" id="GO:0008017">
    <property type="term" value="F:microtubule binding"/>
    <property type="evidence" value="ECO:0000250"/>
    <property type="project" value="UniProtKB"/>
</dbReference>
<dbReference type="InterPro" id="IPR029214">
    <property type="entry name" value="CFAP144"/>
</dbReference>
<dbReference type="PANTHER" id="PTHR33865">
    <property type="entry name" value="PROTEIN FAM183B"/>
    <property type="match status" value="1"/>
</dbReference>
<dbReference type="PANTHER" id="PTHR33865:SF3">
    <property type="entry name" value="PROTEIN FAM183B"/>
    <property type="match status" value="1"/>
</dbReference>
<dbReference type="Pfam" id="PF14886">
    <property type="entry name" value="FAM183"/>
    <property type="match status" value="1"/>
</dbReference>
<proteinExistence type="evidence at protein level"/>
<evidence type="ECO:0000250" key="1">
    <source>
        <dbReference type="UniProtKB" id="A6NL82"/>
    </source>
</evidence>
<evidence type="ECO:0000250" key="2">
    <source>
        <dbReference type="UniProtKB" id="Q5NC57"/>
    </source>
</evidence>
<evidence type="ECO:0000256" key="3">
    <source>
        <dbReference type="SAM" id="MobiDB-lite"/>
    </source>
</evidence>
<evidence type="ECO:0000269" key="4">
    <source>
    </source>
</evidence>
<evidence type="ECO:0000305" key="5"/>